<keyword id="KW-1015">Disulfide bond</keyword>
<keyword id="KW-0574">Periplasm</keyword>
<keyword id="KW-0964">Secreted</keyword>
<keyword id="KW-0732">Signal</keyword>
<keyword id="KW-0813">Transport</keyword>
<protein>
    <recommendedName>
        <fullName>Putrescine-binding periplasmic protein SpuD</fullName>
    </recommendedName>
</protein>
<organism>
    <name type="scientific">Pseudomonas aeruginosa (strain UCBPP-PA14)</name>
    <dbReference type="NCBI Taxonomy" id="208963"/>
    <lineage>
        <taxon>Bacteria</taxon>
        <taxon>Pseudomonadati</taxon>
        <taxon>Pseudomonadota</taxon>
        <taxon>Gammaproteobacteria</taxon>
        <taxon>Pseudomonadales</taxon>
        <taxon>Pseudomonadaceae</taxon>
        <taxon>Pseudomonas</taxon>
    </lineage>
</organism>
<accession>Q02UB7</accession>
<name>SPUD_PSEAB</name>
<sequence>MMKRFGKTLLALTLAGSVAGMAQAADNKVLHVYNWSDYIAPDTLEKFTKETGIKVVYDVYDSNEVLEAKLLAGKSGYDVVVPSNSFLAKQIKAGVYQKLDKSKLPNWKNLNKDLMHTLEVSDPGNEHAIPYMWGTIGIGYNPDKVKAAFGDNAPVDSWDLVFKPENIQKLKQCGVSFLDSPTEILPAALHYLGYKPDTDNPKELKAAEELFLKIRPYVTYFHSSKYISDLANGNICVAIGYSGDIYQAKSRAEEAKNKVTVKYNIPKEGAGSFFDMVAIPKDAENTEGALAFVNFLMKPEIMAEITDVVQFPNGNAAATPLVSEAIRNDPGIYPSEEVMKKLYTFPDLPAKTQRAMTRSWTKIKSGK</sequence>
<gene>
    <name type="primary">spuD</name>
    <name type="ordered locus">PA14_03920</name>
</gene>
<comment type="function">
    <text evidence="1">Putrescine-binding protein probably required for putrescine uptake into cells. Binds putrescine with high affinity, spermidine with relatively low affinity. Does not bind cadaverine or spermine. Putrescine binding induces large inter-domain conformational changes.</text>
</comment>
<comment type="subcellular location">
    <subcellularLocation>
        <location evidence="3">Periplasm</location>
    </subcellularLocation>
    <subcellularLocation>
        <location evidence="4">Secreted</location>
    </subcellularLocation>
    <text evidence="5">Could be present extracellularly due to cell outer membrane leakage.</text>
</comment>
<comment type="similarity">
    <text evidence="3">Belongs to the bacterial solute-binding protein PotD/PotF family.</text>
</comment>
<evidence type="ECO:0000250" key="1">
    <source>
        <dbReference type="UniProtKB" id="Q9I6J1"/>
    </source>
</evidence>
<evidence type="ECO:0000255" key="2"/>
<evidence type="ECO:0000255" key="3">
    <source>
        <dbReference type="PIRNR" id="PIRNR019574"/>
    </source>
</evidence>
<evidence type="ECO:0000269" key="4">
    <source>
    </source>
</evidence>
<evidence type="ECO:0000305" key="5"/>
<reference key="1">
    <citation type="journal article" date="2006" name="Genome Biol.">
        <title>Genomic analysis reveals that Pseudomonas aeruginosa virulence is combinatorial.</title>
        <authorList>
            <person name="Lee D.G."/>
            <person name="Urbach J.M."/>
            <person name="Wu G."/>
            <person name="Liberati N.T."/>
            <person name="Feinbaum R.L."/>
            <person name="Miyata S."/>
            <person name="Diggins L.T."/>
            <person name="He J."/>
            <person name="Saucier M."/>
            <person name="Deziel E."/>
            <person name="Friedman L."/>
            <person name="Li L."/>
            <person name="Grills G."/>
            <person name="Montgomery K."/>
            <person name="Kucherlapati R."/>
            <person name="Rahme L.G."/>
            <person name="Ausubel F.M."/>
        </authorList>
    </citation>
    <scope>NUCLEOTIDE SEQUENCE [LARGE SCALE GENOMIC DNA]</scope>
    <source>
        <strain>UCBPP-PA14</strain>
    </source>
</reference>
<reference key="2">
    <citation type="journal article" date="2014" name="Proteomics">
        <title>Extracellular Ser/Thr/Tyr phosphorylated proteins of Pseudomonas aeruginosa PA14 strain.</title>
        <authorList>
            <person name="Ouidir T."/>
            <person name="Jarnier F."/>
            <person name="Cosette P."/>
            <person name="Jouenne T."/>
            <person name="Hardouin J."/>
        </authorList>
    </citation>
    <scope>IDENTIFICATION BY MASS SPECTROMETRY</scope>
    <scope>SUBCELLULAR LOCATION</scope>
    <source>
        <strain>UCBPP-PA14</strain>
    </source>
</reference>
<proteinExistence type="evidence at protein level"/>
<feature type="signal peptide" evidence="2">
    <location>
        <begin position="1"/>
        <end position="24"/>
    </location>
</feature>
<feature type="chain" id="PRO_0000431395" description="Putrescine-binding periplasmic protein SpuD" evidence="2">
    <location>
        <begin position="25"/>
        <end position="367"/>
    </location>
</feature>
<feature type="binding site" evidence="1">
    <location>
        <begin position="36"/>
        <end position="37"/>
    </location>
    <ligand>
        <name>putrescine</name>
        <dbReference type="ChEBI" id="CHEBI:326268"/>
    </ligand>
</feature>
<feature type="binding site" evidence="1">
    <location>
        <position position="244"/>
    </location>
    <ligand>
        <name>putrescine</name>
        <dbReference type="ChEBI" id="CHEBI:326268"/>
    </ligand>
</feature>
<feature type="binding site" evidence="1">
    <location>
        <position position="275"/>
    </location>
    <ligand>
        <name>putrescine</name>
        <dbReference type="ChEBI" id="CHEBI:326268"/>
    </ligand>
</feature>
<feature type="disulfide bond" evidence="1">
    <location>
        <begin position="173"/>
        <end position="236"/>
    </location>
</feature>
<dbReference type="EMBL" id="CP000438">
    <property type="protein sequence ID" value="ABJ15262.1"/>
    <property type="molecule type" value="Genomic_DNA"/>
</dbReference>
<dbReference type="RefSeq" id="WP_003084299.1">
    <property type="nucleotide sequence ID" value="NZ_CP034244.1"/>
</dbReference>
<dbReference type="SMR" id="Q02UB7"/>
<dbReference type="KEGG" id="pau:PA14_03920"/>
<dbReference type="PseudoCAP" id="PA14_03920"/>
<dbReference type="HOGENOM" id="CLU_026974_1_4_6"/>
<dbReference type="BioCyc" id="PAER208963:G1G74-328-MONOMER"/>
<dbReference type="Proteomes" id="UP000000653">
    <property type="component" value="Chromosome"/>
</dbReference>
<dbReference type="GO" id="GO:0005576">
    <property type="term" value="C:extracellular region"/>
    <property type="evidence" value="ECO:0007669"/>
    <property type="project" value="UniProtKB-SubCell"/>
</dbReference>
<dbReference type="GO" id="GO:0042597">
    <property type="term" value="C:periplasmic space"/>
    <property type="evidence" value="ECO:0007669"/>
    <property type="project" value="UniProtKB-SubCell"/>
</dbReference>
<dbReference type="GO" id="GO:0019808">
    <property type="term" value="F:polyamine binding"/>
    <property type="evidence" value="ECO:0007669"/>
    <property type="project" value="InterPro"/>
</dbReference>
<dbReference type="GO" id="GO:0015846">
    <property type="term" value="P:polyamine transport"/>
    <property type="evidence" value="ECO:0007669"/>
    <property type="project" value="InterPro"/>
</dbReference>
<dbReference type="CDD" id="cd13659">
    <property type="entry name" value="PBP2_PotF"/>
    <property type="match status" value="1"/>
</dbReference>
<dbReference type="Gene3D" id="3.40.190.10">
    <property type="entry name" value="Periplasmic binding protein-like II"/>
    <property type="match status" value="2"/>
</dbReference>
<dbReference type="InterPro" id="IPR006059">
    <property type="entry name" value="SBP"/>
</dbReference>
<dbReference type="InterPro" id="IPR001188">
    <property type="entry name" value="Sperm_putr-bd"/>
</dbReference>
<dbReference type="PANTHER" id="PTHR30222:SF12">
    <property type="entry name" value="NORSPERMIDINE SENSOR"/>
    <property type="match status" value="1"/>
</dbReference>
<dbReference type="PANTHER" id="PTHR30222">
    <property type="entry name" value="SPERMIDINE/PUTRESCINE-BINDING PERIPLASMIC PROTEIN"/>
    <property type="match status" value="1"/>
</dbReference>
<dbReference type="Pfam" id="PF13416">
    <property type="entry name" value="SBP_bac_8"/>
    <property type="match status" value="1"/>
</dbReference>
<dbReference type="PIRSF" id="PIRSF019574">
    <property type="entry name" value="Periplasmic_polyamine_BP"/>
    <property type="match status" value="1"/>
</dbReference>
<dbReference type="PRINTS" id="PR00909">
    <property type="entry name" value="SPERMDNBNDNG"/>
</dbReference>
<dbReference type="SUPFAM" id="SSF53850">
    <property type="entry name" value="Periplasmic binding protein-like II"/>
    <property type="match status" value="1"/>
</dbReference>